<proteinExistence type="inferred from homology"/>
<name>PANC_ECO55</name>
<accession>B7LGJ5</accession>
<feature type="chain" id="PRO_1000123413" description="Pantothenate synthetase">
    <location>
        <begin position="1"/>
        <end position="283"/>
    </location>
</feature>
<feature type="active site" description="Proton donor" evidence="1">
    <location>
        <position position="37"/>
    </location>
</feature>
<feature type="binding site" evidence="1">
    <location>
        <begin position="30"/>
        <end position="37"/>
    </location>
    <ligand>
        <name>ATP</name>
        <dbReference type="ChEBI" id="CHEBI:30616"/>
    </ligand>
</feature>
<feature type="binding site" evidence="1">
    <location>
        <position position="61"/>
    </location>
    <ligand>
        <name>(R)-pantoate</name>
        <dbReference type="ChEBI" id="CHEBI:15980"/>
    </ligand>
</feature>
<feature type="binding site" evidence="1">
    <location>
        <position position="61"/>
    </location>
    <ligand>
        <name>beta-alanine</name>
        <dbReference type="ChEBI" id="CHEBI:57966"/>
    </ligand>
</feature>
<feature type="binding site" evidence="1">
    <location>
        <begin position="149"/>
        <end position="152"/>
    </location>
    <ligand>
        <name>ATP</name>
        <dbReference type="ChEBI" id="CHEBI:30616"/>
    </ligand>
</feature>
<feature type="binding site" evidence="1">
    <location>
        <position position="155"/>
    </location>
    <ligand>
        <name>(R)-pantoate</name>
        <dbReference type="ChEBI" id="CHEBI:15980"/>
    </ligand>
</feature>
<feature type="binding site" evidence="1">
    <location>
        <begin position="186"/>
        <end position="189"/>
    </location>
    <ligand>
        <name>ATP</name>
        <dbReference type="ChEBI" id="CHEBI:30616"/>
    </ligand>
</feature>
<protein>
    <recommendedName>
        <fullName evidence="1">Pantothenate synthetase</fullName>
        <shortName evidence="1">PS</shortName>
        <ecNumber evidence="1">6.3.2.1</ecNumber>
    </recommendedName>
    <alternativeName>
        <fullName evidence="1">Pantoate--beta-alanine ligase</fullName>
    </alternativeName>
    <alternativeName>
        <fullName evidence="1">Pantoate-activating enzyme</fullName>
    </alternativeName>
</protein>
<evidence type="ECO:0000255" key="1">
    <source>
        <dbReference type="HAMAP-Rule" id="MF_00158"/>
    </source>
</evidence>
<reference key="1">
    <citation type="journal article" date="2009" name="PLoS Genet.">
        <title>Organised genome dynamics in the Escherichia coli species results in highly diverse adaptive paths.</title>
        <authorList>
            <person name="Touchon M."/>
            <person name="Hoede C."/>
            <person name="Tenaillon O."/>
            <person name="Barbe V."/>
            <person name="Baeriswyl S."/>
            <person name="Bidet P."/>
            <person name="Bingen E."/>
            <person name="Bonacorsi S."/>
            <person name="Bouchier C."/>
            <person name="Bouvet O."/>
            <person name="Calteau A."/>
            <person name="Chiapello H."/>
            <person name="Clermont O."/>
            <person name="Cruveiller S."/>
            <person name="Danchin A."/>
            <person name="Diard M."/>
            <person name="Dossat C."/>
            <person name="Karoui M.E."/>
            <person name="Frapy E."/>
            <person name="Garry L."/>
            <person name="Ghigo J.M."/>
            <person name="Gilles A.M."/>
            <person name="Johnson J."/>
            <person name="Le Bouguenec C."/>
            <person name="Lescat M."/>
            <person name="Mangenot S."/>
            <person name="Martinez-Jehanne V."/>
            <person name="Matic I."/>
            <person name="Nassif X."/>
            <person name="Oztas S."/>
            <person name="Petit M.A."/>
            <person name="Pichon C."/>
            <person name="Rouy Z."/>
            <person name="Ruf C.S."/>
            <person name="Schneider D."/>
            <person name="Tourret J."/>
            <person name="Vacherie B."/>
            <person name="Vallenet D."/>
            <person name="Medigue C."/>
            <person name="Rocha E.P.C."/>
            <person name="Denamur E."/>
        </authorList>
    </citation>
    <scope>NUCLEOTIDE SEQUENCE [LARGE SCALE GENOMIC DNA]</scope>
    <source>
        <strain>55989 / EAEC</strain>
    </source>
</reference>
<comment type="function">
    <text evidence="1">Catalyzes the condensation of pantoate with beta-alanine in an ATP-dependent reaction via a pantoyl-adenylate intermediate.</text>
</comment>
<comment type="catalytic activity">
    <reaction evidence="1">
        <text>(R)-pantoate + beta-alanine + ATP = (R)-pantothenate + AMP + diphosphate + H(+)</text>
        <dbReference type="Rhea" id="RHEA:10912"/>
        <dbReference type="ChEBI" id="CHEBI:15378"/>
        <dbReference type="ChEBI" id="CHEBI:15980"/>
        <dbReference type="ChEBI" id="CHEBI:29032"/>
        <dbReference type="ChEBI" id="CHEBI:30616"/>
        <dbReference type="ChEBI" id="CHEBI:33019"/>
        <dbReference type="ChEBI" id="CHEBI:57966"/>
        <dbReference type="ChEBI" id="CHEBI:456215"/>
        <dbReference type="EC" id="6.3.2.1"/>
    </reaction>
</comment>
<comment type="pathway">
    <text evidence="1">Cofactor biosynthesis; (R)-pantothenate biosynthesis; (R)-pantothenate from (R)-pantoate and beta-alanine: step 1/1.</text>
</comment>
<comment type="subunit">
    <text evidence="1">Homodimer.</text>
</comment>
<comment type="subcellular location">
    <subcellularLocation>
        <location evidence="1">Cytoplasm</location>
    </subcellularLocation>
</comment>
<comment type="miscellaneous">
    <text evidence="1">The reaction proceeds by a bi uni uni bi ping pong mechanism.</text>
</comment>
<comment type="similarity">
    <text evidence="1">Belongs to the pantothenate synthetase family.</text>
</comment>
<organism>
    <name type="scientific">Escherichia coli (strain 55989 / EAEC)</name>
    <dbReference type="NCBI Taxonomy" id="585055"/>
    <lineage>
        <taxon>Bacteria</taxon>
        <taxon>Pseudomonadati</taxon>
        <taxon>Pseudomonadota</taxon>
        <taxon>Gammaproteobacteria</taxon>
        <taxon>Enterobacterales</taxon>
        <taxon>Enterobacteriaceae</taxon>
        <taxon>Escherichia</taxon>
    </lineage>
</organism>
<dbReference type="EC" id="6.3.2.1" evidence="1"/>
<dbReference type="EMBL" id="CU928145">
    <property type="protein sequence ID" value="CAU96014.1"/>
    <property type="molecule type" value="Genomic_DNA"/>
</dbReference>
<dbReference type="RefSeq" id="WP_000905383.1">
    <property type="nucleotide sequence ID" value="NC_011748.1"/>
</dbReference>
<dbReference type="SMR" id="B7LGJ5"/>
<dbReference type="GeneID" id="75202052"/>
<dbReference type="KEGG" id="eck:EC55989_0127"/>
<dbReference type="HOGENOM" id="CLU_047148_0_0_6"/>
<dbReference type="UniPathway" id="UPA00028">
    <property type="reaction ID" value="UER00005"/>
</dbReference>
<dbReference type="Proteomes" id="UP000000746">
    <property type="component" value="Chromosome"/>
</dbReference>
<dbReference type="GO" id="GO:0005829">
    <property type="term" value="C:cytosol"/>
    <property type="evidence" value="ECO:0007669"/>
    <property type="project" value="TreeGrafter"/>
</dbReference>
<dbReference type="GO" id="GO:0005524">
    <property type="term" value="F:ATP binding"/>
    <property type="evidence" value="ECO:0007669"/>
    <property type="project" value="UniProtKB-KW"/>
</dbReference>
<dbReference type="GO" id="GO:0004592">
    <property type="term" value="F:pantoate-beta-alanine ligase activity"/>
    <property type="evidence" value="ECO:0007669"/>
    <property type="project" value="UniProtKB-UniRule"/>
</dbReference>
<dbReference type="GO" id="GO:0015940">
    <property type="term" value="P:pantothenate biosynthetic process"/>
    <property type="evidence" value="ECO:0007669"/>
    <property type="project" value="UniProtKB-UniRule"/>
</dbReference>
<dbReference type="CDD" id="cd00560">
    <property type="entry name" value="PanC"/>
    <property type="match status" value="1"/>
</dbReference>
<dbReference type="FunFam" id="3.30.1300.10:FF:000001">
    <property type="entry name" value="Pantothenate synthetase"/>
    <property type="match status" value="1"/>
</dbReference>
<dbReference type="FunFam" id="3.40.50.620:FF:000013">
    <property type="entry name" value="Pantothenate synthetase"/>
    <property type="match status" value="1"/>
</dbReference>
<dbReference type="Gene3D" id="3.40.50.620">
    <property type="entry name" value="HUPs"/>
    <property type="match status" value="1"/>
</dbReference>
<dbReference type="Gene3D" id="3.30.1300.10">
    <property type="entry name" value="Pantoate-beta-alanine ligase, C-terminal domain"/>
    <property type="match status" value="1"/>
</dbReference>
<dbReference type="HAMAP" id="MF_00158">
    <property type="entry name" value="PanC"/>
    <property type="match status" value="1"/>
</dbReference>
<dbReference type="InterPro" id="IPR004821">
    <property type="entry name" value="Cyt_trans-like"/>
</dbReference>
<dbReference type="InterPro" id="IPR003721">
    <property type="entry name" value="Pantoate_ligase"/>
</dbReference>
<dbReference type="InterPro" id="IPR042176">
    <property type="entry name" value="Pantoate_ligase_C"/>
</dbReference>
<dbReference type="InterPro" id="IPR014729">
    <property type="entry name" value="Rossmann-like_a/b/a_fold"/>
</dbReference>
<dbReference type="NCBIfam" id="TIGR00125">
    <property type="entry name" value="cyt_tran_rel"/>
    <property type="match status" value="1"/>
</dbReference>
<dbReference type="NCBIfam" id="TIGR00018">
    <property type="entry name" value="panC"/>
    <property type="match status" value="1"/>
</dbReference>
<dbReference type="PANTHER" id="PTHR21299">
    <property type="entry name" value="CYTIDYLATE KINASE/PANTOATE-BETA-ALANINE LIGASE"/>
    <property type="match status" value="1"/>
</dbReference>
<dbReference type="PANTHER" id="PTHR21299:SF1">
    <property type="entry name" value="PANTOATE--BETA-ALANINE LIGASE"/>
    <property type="match status" value="1"/>
</dbReference>
<dbReference type="Pfam" id="PF02569">
    <property type="entry name" value="Pantoate_ligase"/>
    <property type="match status" value="1"/>
</dbReference>
<dbReference type="SUPFAM" id="SSF52374">
    <property type="entry name" value="Nucleotidylyl transferase"/>
    <property type="match status" value="1"/>
</dbReference>
<gene>
    <name evidence="1" type="primary">panC</name>
    <name type="ordered locus">EC55989_0127</name>
</gene>
<keyword id="KW-0067">ATP-binding</keyword>
<keyword id="KW-0963">Cytoplasm</keyword>
<keyword id="KW-0436">Ligase</keyword>
<keyword id="KW-0547">Nucleotide-binding</keyword>
<keyword id="KW-0566">Pantothenate biosynthesis</keyword>
<keyword id="KW-1185">Reference proteome</keyword>
<sequence length="283" mass="31598">MLIIETLPLLRQQIRRLRMEGKRVALVPTMGNLHDGHMKLVDEAKARADVVVVSIFVNPMQFDRPEDLARYPRTLQEDCEKLNKRKVDLVFAPSVKEIYPNGTETHTYVDVPGLSTMLEGASRPGHFRGVSTIVSKLFNLVQPDIACFGEKDFQQLALIRKMVADMGFDIEIVGVPIMRAKDGLALSSRNGYLTAEQRKIAPGLYKVLSSIADKLQAGERDLDEIITIAGQELNEKGFRADDIQIRDADTLLEVSETSKRAVILVAAWLGDARLIDNKMVELA</sequence>